<keyword id="KW-0067">ATP-binding</keyword>
<keyword id="KW-0963">Cytoplasm</keyword>
<keyword id="KW-0324">Glycolysis</keyword>
<keyword id="KW-0418">Kinase</keyword>
<keyword id="KW-0547">Nucleotide-binding</keyword>
<keyword id="KW-0808">Transferase</keyword>
<protein>
    <recommendedName>
        <fullName evidence="1">Glucokinase</fullName>
        <ecNumber evidence="1">2.7.1.2</ecNumber>
    </recommendedName>
    <alternativeName>
        <fullName evidence="1">Glucose kinase</fullName>
    </alternativeName>
</protein>
<evidence type="ECO:0000255" key="1">
    <source>
        <dbReference type="HAMAP-Rule" id="MF_00524"/>
    </source>
</evidence>
<comment type="catalytic activity">
    <reaction evidence="1">
        <text>D-glucose + ATP = D-glucose 6-phosphate + ADP + H(+)</text>
        <dbReference type="Rhea" id="RHEA:17825"/>
        <dbReference type="ChEBI" id="CHEBI:4167"/>
        <dbReference type="ChEBI" id="CHEBI:15378"/>
        <dbReference type="ChEBI" id="CHEBI:30616"/>
        <dbReference type="ChEBI" id="CHEBI:61548"/>
        <dbReference type="ChEBI" id="CHEBI:456216"/>
        <dbReference type="EC" id="2.7.1.2"/>
    </reaction>
</comment>
<comment type="subcellular location">
    <subcellularLocation>
        <location evidence="1">Cytoplasm</location>
    </subcellularLocation>
</comment>
<comment type="similarity">
    <text evidence="1">Belongs to the bacterial glucokinase family.</text>
</comment>
<name>GLK_SALCH</name>
<feature type="chain" id="PRO_0000268785" description="Glucokinase">
    <location>
        <begin position="1"/>
        <end position="321"/>
    </location>
</feature>
<feature type="binding site" evidence="1">
    <location>
        <begin position="8"/>
        <end position="13"/>
    </location>
    <ligand>
        <name>ATP</name>
        <dbReference type="ChEBI" id="CHEBI:30616"/>
    </ligand>
</feature>
<proteinExistence type="inferred from homology"/>
<organism>
    <name type="scientific">Salmonella choleraesuis (strain SC-B67)</name>
    <dbReference type="NCBI Taxonomy" id="321314"/>
    <lineage>
        <taxon>Bacteria</taxon>
        <taxon>Pseudomonadati</taxon>
        <taxon>Pseudomonadota</taxon>
        <taxon>Gammaproteobacteria</taxon>
        <taxon>Enterobacterales</taxon>
        <taxon>Enterobacteriaceae</taxon>
        <taxon>Salmonella</taxon>
    </lineage>
</organism>
<reference key="1">
    <citation type="journal article" date="2005" name="Nucleic Acids Res.">
        <title>The genome sequence of Salmonella enterica serovar Choleraesuis, a highly invasive and resistant zoonotic pathogen.</title>
        <authorList>
            <person name="Chiu C.-H."/>
            <person name="Tang P."/>
            <person name="Chu C."/>
            <person name="Hu S."/>
            <person name="Bao Q."/>
            <person name="Yu J."/>
            <person name="Chou Y.-Y."/>
            <person name="Wang H.-S."/>
            <person name="Lee Y.-S."/>
        </authorList>
    </citation>
    <scope>NUCLEOTIDE SEQUENCE [LARGE SCALE GENOMIC DNA]</scope>
    <source>
        <strain>SC-B67</strain>
    </source>
</reference>
<sequence length="321" mass="34622">MTKYALVGDVGGTNARLALCDIASGEISQAKTYSGLDYPSLEAVVRVYLDEHSVSVEDGCIAIACPITGDWVAMTNHTWAFSIAEMKKNLGFSHLEIINDFTAVSMAIPMLKKEHLIQFGGGEPVDGKPIAVYGAGTGLGVAHLVHVDKRWISLPGEGGHVDFAPNSEEEAMILEILRAEIGHVSAERVLSGPGLVNLYRAIVKSDNRLPENLRPKDITERALADNCIDCRRALSLFCVIMGRFGGDLALTMGTFGGVYIAGGIVPRFLEFFKASGFRGGFEDKGRFKDYVHGIPVYLIVHDNPGLLGSGAHLRQTLGHIL</sequence>
<dbReference type="EC" id="2.7.1.2" evidence="1"/>
<dbReference type="EMBL" id="AE017220">
    <property type="protein sequence ID" value="AAX66312.1"/>
    <property type="molecule type" value="Genomic_DNA"/>
</dbReference>
<dbReference type="RefSeq" id="WP_000170376.1">
    <property type="nucleotide sequence ID" value="NC_006905.1"/>
</dbReference>
<dbReference type="SMR" id="Q57LV0"/>
<dbReference type="KEGG" id="sec:SCH_2406"/>
<dbReference type="HOGENOM" id="CLU_042582_1_0_6"/>
<dbReference type="Proteomes" id="UP000000538">
    <property type="component" value="Chromosome"/>
</dbReference>
<dbReference type="GO" id="GO:0005829">
    <property type="term" value="C:cytosol"/>
    <property type="evidence" value="ECO:0007669"/>
    <property type="project" value="TreeGrafter"/>
</dbReference>
<dbReference type="GO" id="GO:0005524">
    <property type="term" value="F:ATP binding"/>
    <property type="evidence" value="ECO:0007669"/>
    <property type="project" value="UniProtKB-UniRule"/>
</dbReference>
<dbReference type="GO" id="GO:0005536">
    <property type="term" value="F:D-glucose binding"/>
    <property type="evidence" value="ECO:0007669"/>
    <property type="project" value="InterPro"/>
</dbReference>
<dbReference type="GO" id="GO:0004340">
    <property type="term" value="F:glucokinase activity"/>
    <property type="evidence" value="ECO:0007669"/>
    <property type="project" value="UniProtKB-UniRule"/>
</dbReference>
<dbReference type="GO" id="GO:0006096">
    <property type="term" value="P:glycolytic process"/>
    <property type="evidence" value="ECO:0007669"/>
    <property type="project" value="UniProtKB-UniRule"/>
</dbReference>
<dbReference type="CDD" id="cd24008">
    <property type="entry name" value="ASKHA_NBD_GLK"/>
    <property type="match status" value="1"/>
</dbReference>
<dbReference type="FunFam" id="3.30.420.40:FF:000045">
    <property type="entry name" value="Glucokinase"/>
    <property type="match status" value="1"/>
</dbReference>
<dbReference type="FunFam" id="3.40.367.20:FF:000002">
    <property type="entry name" value="Glucokinase"/>
    <property type="match status" value="1"/>
</dbReference>
<dbReference type="Gene3D" id="3.30.420.40">
    <property type="match status" value="1"/>
</dbReference>
<dbReference type="Gene3D" id="3.40.367.20">
    <property type="match status" value="1"/>
</dbReference>
<dbReference type="HAMAP" id="MF_00524">
    <property type="entry name" value="Glucokinase"/>
    <property type="match status" value="1"/>
</dbReference>
<dbReference type="InterPro" id="IPR043129">
    <property type="entry name" value="ATPase_NBD"/>
</dbReference>
<dbReference type="InterPro" id="IPR050201">
    <property type="entry name" value="Bacterial_glucokinase"/>
</dbReference>
<dbReference type="InterPro" id="IPR003836">
    <property type="entry name" value="Glucokinase"/>
</dbReference>
<dbReference type="NCBIfam" id="TIGR00749">
    <property type="entry name" value="glk"/>
    <property type="match status" value="1"/>
</dbReference>
<dbReference type="NCBIfam" id="NF001414">
    <property type="entry name" value="PRK00292.1-1"/>
    <property type="match status" value="1"/>
</dbReference>
<dbReference type="NCBIfam" id="NF001416">
    <property type="entry name" value="PRK00292.1-3"/>
    <property type="match status" value="1"/>
</dbReference>
<dbReference type="PANTHER" id="PTHR47690">
    <property type="entry name" value="GLUCOKINASE"/>
    <property type="match status" value="1"/>
</dbReference>
<dbReference type="PANTHER" id="PTHR47690:SF1">
    <property type="entry name" value="GLUCOKINASE"/>
    <property type="match status" value="1"/>
</dbReference>
<dbReference type="Pfam" id="PF02685">
    <property type="entry name" value="Glucokinase"/>
    <property type="match status" value="1"/>
</dbReference>
<dbReference type="SUPFAM" id="SSF53067">
    <property type="entry name" value="Actin-like ATPase domain"/>
    <property type="match status" value="1"/>
</dbReference>
<accession>Q57LV0</accession>
<gene>
    <name evidence="1" type="primary">glk</name>
    <name type="ordered locus">SCH_2406</name>
</gene>